<evidence type="ECO:0000255" key="1">
    <source>
        <dbReference type="HAMAP-Rule" id="MF_01006"/>
    </source>
</evidence>
<feature type="chain" id="PRO_0000151176" description="Undecaprenyl-diphosphatase">
    <location>
        <begin position="1"/>
        <end position="280"/>
    </location>
</feature>
<feature type="transmembrane region" description="Helical" evidence="1">
    <location>
        <begin position="1"/>
        <end position="21"/>
    </location>
</feature>
<feature type="transmembrane region" description="Helical" evidence="1">
    <location>
        <begin position="41"/>
        <end position="61"/>
    </location>
</feature>
<feature type="transmembrane region" description="Helical" evidence="1">
    <location>
        <begin position="87"/>
        <end position="107"/>
    </location>
</feature>
<feature type="transmembrane region" description="Helical" evidence="1">
    <location>
        <begin position="115"/>
        <end position="135"/>
    </location>
</feature>
<feature type="transmembrane region" description="Helical" evidence="1">
    <location>
        <begin position="147"/>
        <end position="167"/>
    </location>
</feature>
<feature type="transmembrane region" description="Helical" evidence="1">
    <location>
        <begin position="186"/>
        <end position="206"/>
    </location>
</feature>
<feature type="transmembrane region" description="Helical" evidence="1">
    <location>
        <begin position="226"/>
        <end position="246"/>
    </location>
</feature>
<feature type="transmembrane region" description="Helical" evidence="1">
    <location>
        <begin position="260"/>
        <end position="280"/>
    </location>
</feature>
<organism>
    <name type="scientific">Porphyromonas gingivalis (strain ATCC BAA-308 / W83)</name>
    <dbReference type="NCBI Taxonomy" id="242619"/>
    <lineage>
        <taxon>Bacteria</taxon>
        <taxon>Pseudomonadati</taxon>
        <taxon>Bacteroidota</taxon>
        <taxon>Bacteroidia</taxon>
        <taxon>Bacteroidales</taxon>
        <taxon>Porphyromonadaceae</taxon>
        <taxon>Porphyromonas</taxon>
    </lineage>
</organism>
<name>UPPP_PORGI</name>
<keyword id="KW-0046">Antibiotic resistance</keyword>
<keyword id="KW-0997">Cell inner membrane</keyword>
<keyword id="KW-1003">Cell membrane</keyword>
<keyword id="KW-0133">Cell shape</keyword>
<keyword id="KW-0961">Cell wall biogenesis/degradation</keyword>
<keyword id="KW-0378">Hydrolase</keyword>
<keyword id="KW-0472">Membrane</keyword>
<keyword id="KW-0573">Peptidoglycan synthesis</keyword>
<keyword id="KW-1185">Reference proteome</keyword>
<keyword id="KW-0812">Transmembrane</keyword>
<keyword id="KW-1133">Transmembrane helix</keyword>
<accession>Q7MUH6</accession>
<gene>
    <name evidence="1" type="primary">uppP</name>
    <name type="synonym">bacA</name>
    <name type="synonym">upk</name>
    <name type="ordered locus">PG_1538</name>
</gene>
<sequence>MTILQAIVLAIVEGLTEFLPVSSTGHMIIAEGIMGVESTSFVRAFTVMIQFGAILSVLVLYRKRFFCFPVAPRALGQGKGKEFMSRFDLYWKLLIALVPAVILGFLFEDWVDRMLGSVWVVAVVLFLGGIFMLFVDKLFASSDRGEITYPKAFVIGLFQCLAIFLPGLSRSMATIVGGQQQKLSRKAAAEFSFFLAVPTMLGATLLKAYKLYKEGGIEIFREHMTVLLVGNIVAFIVALAAIKFFIGFLTRYGFKAFGYYRILVGGLLIVLMLSGVSLAV</sequence>
<protein>
    <recommendedName>
        <fullName evidence="1">Undecaprenyl-diphosphatase</fullName>
        <ecNumber evidence="1">3.6.1.27</ecNumber>
    </recommendedName>
    <alternativeName>
        <fullName evidence="1">Bacitracin resistance protein</fullName>
    </alternativeName>
    <alternativeName>
        <fullName evidence="1">Undecaprenyl pyrophosphate phosphatase</fullName>
    </alternativeName>
</protein>
<proteinExistence type="inferred from homology"/>
<comment type="function">
    <text evidence="1">Catalyzes the dephosphorylation of undecaprenyl diphosphate (UPP). Confers resistance to bacitracin.</text>
</comment>
<comment type="catalytic activity">
    <reaction evidence="1">
        <text>di-trans,octa-cis-undecaprenyl diphosphate + H2O = di-trans,octa-cis-undecaprenyl phosphate + phosphate + H(+)</text>
        <dbReference type="Rhea" id="RHEA:28094"/>
        <dbReference type="ChEBI" id="CHEBI:15377"/>
        <dbReference type="ChEBI" id="CHEBI:15378"/>
        <dbReference type="ChEBI" id="CHEBI:43474"/>
        <dbReference type="ChEBI" id="CHEBI:58405"/>
        <dbReference type="ChEBI" id="CHEBI:60392"/>
        <dbReference type="EC" id="3.6.1.27"/>
    </reaction>
</comment>
<comment type="subcellular location">
    <subcellularLocation>
        <location evidence="1">Cell inner membrane</location>
        <topology evidence="1">Multi-pass membrane protein</topology>
    </subcellularLocation>
</comment>
<comment type="miscellaneous">
    <text>Bacitracin is thought to be involved in the inhibition of peptidoglycan synthesis by sequestering undecaprenyl diphosphate, thereby reducing the pool of lipid carrier available.</text>
</comment>
<comment type="similarity">
    <text evidence="1">Belongs to the UppP family.</text>
</comment>
<reference key="1">
    <citation type="journal article" date="2003" name="J. Bacteriol.">
        <title>Complete genome sequence of the oral pathogenic bacterium Porphyromonas gingivalis strain W83.</title>
        <authorList>
            <person name="Nelson K.E."/>
            <person name="Fleischmann R.D."/>
            <person name="DeBoy R.T."/>
            <person name="Paulsen I.T."/>
            <person name="Fouts D.E."/>
            <person name="Eisen J.A."/>
            <person name="Daugherty S.C."/>
            <person name="Dodson R.J."/>
            <person name="Durkin A.S."/>
            <person name="Gwinn M.L."/>
            <person name="Haft D.H."/>
            <person name="Kolonay J.F."/>
            <person name="Nelson W.C."/>
            <person name="Mason T.M."/>
            <person name="Tallon L."/>
            <person name="Gray J."/>
            <person name="Granger D."/>
            <person name="Tettelin H."/>
            <person name="Dong H."/>
            <person name="Galvin J.L."/>
            <person name="Duncan M.J."/>
            <person name="Dewhirst F.E."/>
            <person name="Fraser C.M."/>
        </authorList>
    </citation>
    <scope>NUCLEOTIDE SEQUENCE [LARGE SCALE GENOMIC DNA]</scope>
    <source>
        <strain>ATCC BAA-308 / W83</strain>
    </source>
</reference>
<dbReference type="EC" id="3.6.1.27" evidence="1"/>
<dbReference type="EMBL" id="AE015924">
    <property type="protein sequence ID" value="AAQ66577.1"/>
    <property type="molecule type" value="Genomic_DNA"/>
</dbReference>
<dbReference type="RefSeq" id="WP_005874669.1">
    <property type="nucleotide sequence ID" value="NC_002950.2"/>
</dbReference>
<dbReference type="SMR" id="Q7MUH6"/>
<dbReference type="STRING" id="242619.PG_1538"/>
<dbReference type="EnsemblBacteria" id="AAQ66577">
    <property type="protein sequence ID" value="AAQ66577"/>
    <property type="gene ID" value="PG_1538"/>
</dbReference>
<dbReference type="KEGG" id="pgi:PG_1538"/>
<dbReference type="eggNOG" id="COG1968">
    <property type="taxonomic scope" value="Bacteria"/>
</dbReference>
<dbReference type="HOGENOM" id="CLU_060296_2_0_10"/>
<dbReference type="Proteomes" id="UP000000588">
    <property type="component" value="Chromosome"/>
</dbReference>
<dbReference type="GO" id="GO:0005886">
    <property type="term" value="C:plasma membrane"/>
    <property type="evidence" value="ECO:0007669"/>
    <property type="project" value="UniProtKB-SubCell"/>
</dbReference>
<dbReference type="GO" id="GO:0050380">
    <property type="term" value="F:undecaprenyl-diphosphatase activity"/>
    <property type="evidence" value="ECO:0007669"/>
    <property type="project" value="UniProtKB-UniRule"/>
</dbReference>
<dbReference type="GO" id="GO:0071555">
    <property type="term" value="P:cell wall organization"/>
    <property type="evidence" value="ECO:0007669"/>
    <property type="project" value="UniProtKB-KW"/>
</dbReference>
<dbReference type="GO" id="GO:0009252">
    <property type="term" value="P:peptidoglycan biosynthetic process"/>
    <property type="evidence" value="ECO:0007669"/>
    <property type="project" value="UniProtKB-KW"/>
</dbReference>
<dbReference type="GO" id="GO:0008360">
    <property type="term" value="P:regulation of cell shape"/>
    <property type="evidence" value="ECO:0007669"/>
    <property type="project" value="UniProtKB-KW"/>
</dbReference>
<dbReference type="GO" id="GO:0046677">
    <property type="term" value="P:response to antibiotic"/>
    <property type="evidence" value="ECO:0007669"/>
    <property type="project" value="UniProtKB-UniRule"/>
</dbReference>
<dbReference type="HAMAP" id="MF_01006">
    <property type="entry name" value="Undec_diphosphatase"/>
    <property type="match status" value="1"/>
</dbReference>
<dbReference type="InterPro" id="IPR003824">
    <property type="entry name" value="UppP"/>
</dbReference>
<dbReference type="NCBIfam" id="NF001390">
    <property type="entry name" value="PRK00281.1-4"/>
    <property type="match status" value="1"/>
</dbReference>
<dbReference type="NCBIfam" id="TIGR00753">
    <property type="entry name" value="undec_PP_bacA"/>
    <property type="match status" value="1"/>
</dbReference>
<dbReference type="PANTHER" id="PTHR30622">
    <property type="entry name" value="UNDECAPRENYL-DIPHOSPHATASE"/>
    <property type="match status" value="1"/>
</dbReference>
<dbReference type="PANTHER" id="PTHR30622:SF3">
    <property type="entry name" value="UNDECAPRENYL-DIPHOSPHATASE"/>
    <property type="match status" value="1"/>
</dbReference>
<dbReference type="Pfam" id="PF02673">
    <property type="entry name" value="BacA"/>
    <property type="match status" value="1"/>
</dbReference>